<protein>
    <recommendedName>
        <fullName evidence="1">tRNA modification GTPase MnmE</fullName>
        <ecNumber evidence="1">3.6.-.-</ecNumber>
    </recommendedName>
</protein>
<accession>B1K0Y2</accession>
<feature type="chain" id="PRO_0000345739" description="tRNA modification GTPase MnmE">
    <location>
        <begin position="1"/>
        <end position="464"/>
    </location>
</feature>
<feature type="domain" description="TrmE-type G">
    <location>
        <begin position="226"/>
        <end position="386"/>
    </location>
</feature>
<feature type="binding site" evidence="1">
    <location>
        <position position="25"/>
    </location>
    <ligand>
        <name>(6S)-5-formyl-5,6,7,8-tetrahydrofolate</name>
        <dbReference type="ChEBI" id="CHEBI:57457"/>
    </ligand>
</feature>
<feature type="binding site" evidence="1">
    <location>
        <position position="87"/>
    </location>
    <ligand>
        <name>(6S)-5-formyl-5,6,7,8-tetrahydrofolate</name>
        <dbReference type="ChEBI" id="CHEBI:57457"/>
    </ligand>
</feature>
<feature type="binding site" evidence="1">
    <location>
        <position position="130"/>
    </location>
    <ligand>
        <name>(6S)-5-formyl-5,6,7,8-tetrahydrofolate</name>
        <dbReference type="ChEBI" id="CHEBI:57457"/>
    </ligand>
</feature>
<feature type="binding site" evidence="1">
    <location>
        <begin position="236"/>
        <end position="241"/>
    </location>
    <ligand>
        <name>GTP</name>
        <dbReference type="ChEBI" id="CHEBI:37565"/>
    </ligand>
</feature>
<feature type="binding site" evidence="1">
    <location>
        <position position="236"/>
    </location>
    <ligand>
        <name>K(+)</name>
        <dbReference type="ChEBI" id="CHEBI:29103"/>
    </ligand>
</feature>
<feature type="binding site" evidence="1">
    <location>
        <position position="240"/>
    </location>
    <ligand>
        <name>Mg(2+)</name>
        <dbReference type="ChEBI" id="CHEBI:18420"/>
    </ligand>
</feature>
<feature type="binding site" evidence="1">
    <location>
        <begin position="255"/>
        <end position="261"/>
    </location>
    <ligand>
        <name>GTP</name>
        <dbReference type="ChEBI" id="CHEBI:37565"/>
    </ligand>
</feature>
<feature type="binding site" evidence="1">
    <location>
        <position position="255"/>
    </location>
    <ligand>
        <name>K(+)</name>
        <dbReference type="ChEBI" id="CHEBI:29103"/>
    </ligand>
</feature>
<feature type="binding site" evidence="1">
    <location>
        <position position="257"/>
    </location>
    <ligand>
        <name>K(+)</name>
        <dbReference type="ChEBI" id="CHEBI:29103"/>
    </ligand>
</feature>
<feature type="binding site" evidence="1">
    <location>
        <position position="260"/>
    </location>
    <ligand>
        <name>K(+)</name>
        <dbReference type="ChEBI" id="CHEBI:29103"/>
    </ligand>
</feature>
<feature type="binding site" evidence="1">
    <location>
        <position position="261"/>
    </location>
    <ligand>
        <name>Mg(2+)</name>
        <dbReference type="ChEBI" id="CHEBI:18420"/>
    </ligand>
</feature>
<feature type="binding site" evidence="1">
    <location>
        <begin position="280"/>
        <end position="283"/>
    </location>
    <ligand>
        <name>GTP</name>
        <dbReference type="ChEBI" id="CHEBI:37565"/>
    </ligand>
</feature>
<feature type="binding site" evidence="1">
    <location>
        <position position="464"/>
    </location>
    <ligand>
        <name>(6S)-5-formyl-5,6,7,8-tetrahydrofolate</name>
        <dbReference type="ChEBI" id="CHEBI:57457"/>
    </ligand>
</feature>
<keyword id="KW-0963">Cytoplasm</keyword>
<keyword id="KW-0342">GTP-binding</keyword>
<keyword id="KW-0378">Hydrolase</keyword>
<keyword id="KW-0460">Magnesium</keyword>
<keyword id="KW-0479">Metal-binding</keyword>
<keyword id="KW-0547">Nucleotide-binding</keyword>
<keyword id="KW-0630">Potassium</keyword>
<keyword id="KW-0819">tRNA processing</keyword>
<name>MNME_BURO0</name>
<proteinExistence type="inferred from homology"/>
<dbReference type="EC" id="3.6.-.-" evidence="1"/>
<dbReference type="EMBL" id="CP000958">
    <property type="protein sequence ID" value="ACA92336.1"/>
    <property type="molecule type" value="Genomic_DNA"/>
</dbReference>
<dbReference type="RefSeq" id="WP_012329457.1">
    <property type="nucleotide sequence ID" value="NC_010508.1"/>
</dbReference>
<dbReference type="SMR" id="B1K0Y2"/>
<dbReference type="GeneID" id="83049961"/>
<dbReference type="KEGG" id="bcm:Bcenmc03_3179"/>
<dbReference type="HOGENOM" id="CLU_019624_4_1_4"/>
<dbReference type="Proteomes" id="UP000002169">
    <property type="component" value="Chromosome 1"/>
</dbReference>
<dbReference type="GO" id="GO:0005829">
    <property type="term" value="C:cytosol"/>
    <property type="evidence" value="ECO:0007669"/>
    <property type="project" value="TreeGrafter"/>
</dbReference>
<dbReference type="GO" id="GO:0005525">
    <property type="term" value="F:GTP binding"/>
    <property type="evidence" value="ECO:0007669"/>
    <property type="project" value="UniProtKB-UniRule"/>
</dbReference>
<dbReference type="GO" id="GO:0003924">
    <property type="term" value="F:GTPase activity"/>
    <property type="evidence" value="ECO:0007669"/>
    <property type="project" value="UniProtKB-UniRule"/>
</dbReference>
<dbReference type="GO" id="GO:0046872">
    <property type="term" value="F:metal ion binding"/>
    <property type="evidence" value="ECO:0007669"/>
    <property type="project" value="UniProtKB-KW"/>
</dbReference>
<dbReference type="GO" id="GO:0030488">
    <property type="term" value="P:tRNA methylation"/>
    <property type="evidence" value="ECO:0007669"/>
    <property type="project" value="TreeGrafter"/>
</dbReference>
<dbReference type="GO" id="GO:0002098">
    <property type="term" value="P:tRNA wobble uridine modification"/>
    <property type="evidence" value="ECO:0007669"/>
    <property type="project" value="TreeGrafter"/>
</dbReference>
<dbReference type="CDD" id="cd04164">
    <property type="entry name" value="trmE"/>
    <property type="match status" value="1"/>
</dbReference>
<dbReference type="CDD" id="cd14858">
    <property type="entry name" value="TrmE_N"/>
    <property type="match status" value="1"/>
</dbReference>
<dbReference type="Gene3D" id="3.40.50.300">
    <property type="entry name" value="P-loop containing nucleotide triphosphate hydrolases"/>
    <property type="match status" value="1"/>
</dbReference>
<dbReference type="Gene3D" id="3.30.1360.120">
    <property type="entry name" value="Probable tRNA modification gtpase trme, domain 1"/>
    <property type="match status" value="1"/>
</dbReference>
<dbReference type="Gene3D" id="1.20.120.430">
    <property type="entry name" value="tRNA modification GTPase MnmE domain 2"/>
    <property type="match status" value="1"/>
</dbReference>
<dbReference type="HAMAP" id="MF_00379">
    <property type="entry name" value="GTPase_MnmE"/>
    <property type="match status" value="1"/>
</dbReference>
<dbReference type="InterPro" id="IPR031168">
    <property type="entry name" value="G_TrmE"/>
</dbReference>
<dbReference type="InterPro" id="IPR006073">
    <property type="entry name" value="GTP-bd"/>
</dbReference>
<dbReference type="InterPro" id="IPR018948">
    <property type="entry name" value="GTP-bd_TrmE_N"/>
</dbReference>
<dbReference type="InterPro" id="IPR004520">
    <property type="entry name" value="GTPase_MnmE"/>
</dbReference>
<dbReference type="InterPro" id="IPR027368">
    <property type="entry name" value="MnmE_dom2"/>
</dbReference>
<dbReference type="InterPro" id="IPR025867">
    <property type="entry name" value="MnmE_helical"/>
</dbReference>
<dbReference type="InterPro" id="IPR027417">
    <property type="entry name" value="P-loop_NTPase"/>
</dbReference>
<dbReference type="InterPro" id="IPR005225">
    <property type="entry name" value="Small_GTP-bd"/>
</dbReference>
<dbReference type="InterPro" id="IPR027266">
    <property type="entry name" value="TrmE/GcvT_dom1"/>
</dbReference>
<dbReference type="NCBIfam" id="TIGR00450">
    <property type="entry name" value="mnmE_trmE_thdF"/>
    <property type="match status" value="1"/>
</dbReference>
<dbReference type="NCBIfam" id="NF003661">
    <property type="entry name" value="PRK05291.1-3"/>
    <property type="match status" value="1"/>
</dbReference>
<dbReference type="NCBIfam" id="TIGR00231">
    <property type="entry name" value="small_GTP"/>
    <property type="match status" value="1"/>
</dbReference>
<dbReference type="PANTHER" id="PTHR42714">
    <property type="entry name" value="TRNA MODIFICATION GTPASE GTPBP3"/>
    <property type="match status" value="1"/>
</dbReference>
<dbReference type="PANTHER" id="PTHR42714:SF2">
    <property type="entry name" value="TRNA MODIFICATION GTPASE GTPBP3, MITOCHONDRIAL"/>
    <property type="match status" value="1"/>
</dbReference>
<dbReference type="Pfam" id="PF01926">
    <property type="entry name" value="MMR_HSR1"/>
    <property type="match status" value="1"/>
</dbReference>
<dbReference type="Pfam" id="PF12631">
    <property type="entry name" value="MnmE_helical"/>
    <property type="match status" value="1"/>
</dbReference>
<dbReference type="Pfam" id="PF10396">
    <property type="entry name" value="TrmE_N"/>
    <property type="match status" value="1"/>
</dbReference>
<dbReference type="PRINTS" id="PR00326">
    <property type="entry name" value="GTP1OBG"/>
</dbReference>
<dbReference type="SUPFAM" id="SSF52540">
    <property type="entry name" value="P-loop containing nucleoside triphosphate hydrolases"/>
    <property type="match status" value="1"/>
</dbReference>
<dbReference type="SUPFAM" id="SSF116878">
    <property type="entry name" value="TrmE connector domain"/>
    <property type="match status" value="1"/>
</dbReference>
<dbReference type="PROSITE" id="PS51709">
    <property type="entry name" value="G_TRME"/>
    <property type="match status" value="1"/>
</dbReference>
<organism>
    <name type="scientific">Burkholderia orbicola (strain MC0-3)</name>
    <dbReference type="NCBI Taxonomy" id="406425"/>
    <lineage>
        <taxon>Bacteria</taxon>
        <taxon>Pseudomonadati</taxon>
        <taxon>Pseudomonadota</taxon>
        <taxon>Betaproteobacteria</taxon>
        <taxon>Burkholderiales</taxon>
        <taxon>Burkholderiaceae</taxon>
        <taxon>Burkholderia</taxon>
        <taxon>Burkholderia cepacia complex</taxon>
        <taxon>Burkholderia orbicola</taxon>
    </lineage>
</organism>
<reference key="1">
    <citation type="submission" date="2008-02" db="EMBL/GenBank/DDBJ databases">
        <title>Complete sequence of chromosome 1 of Burkholderia cenocepacia MC0-3.</title>
        <authorList>
            <person name="Copeland A."/>
            <person name="Lucas S."/>
            <person name="Lapidus A."/>
            <person name="Barry K."/>
            <person name="Bruce D."/>
            <person name="Goodwin L."/>
            <person name="Glavina del Rio T."/>
            <person name="Dalin E."/>
            <person name="Tice H."/>
            <person name="Pitluck S."/>
            <person name="Chain P."/>
            <person name="Malfatti S."/>
            <person name="Shin M."/>
            <person name="Vergez L."/>
            <person name="Schmutz J."/>
            <person name="Larimer F."/>
            <person name="Land M."/>
            <person name="Hauser L."/>
            <person name="Kyrpides N."/>
            <person name="Mikhailova N."/>
            <person name="Tiedje J."/>
            <person name="Richardson P."/>
        </authorList>
    </citation>
    <scope>NUCLEOTIDE SEQUENCE [LARGE SCALE GENOMIC DNA]</scope>
    <source>
        <strain>MC0-3</strain>
    </source>
</reference>
<evidence type="ECO:0000255" key="1">
    <source>
        <dbReference type="HAMAP-Rule" id="MF_00379"/>
    </source>
</evidence>
<comment type="function">
    <text evidence="1">Exhibits a very high intrinsic GTPase hydrolysis rate. Involved in the addition of a carboxymethylaminomethyl (cmnm) group at the wobble position (U34) of certain tRNAs, forming tRNA-cmnm(5)s(2)U34.</text>
</comment>
<comment type="cofactor">
    <cofactor evidence="1">
        <name>K(+)</name>
        <dbReference type="ChEBI" id="CHEBI:29103"/>
    </cofactor>
    <text evidence="1">Binds 1 potassium ion per subunit.</text>
</comment>
<comment type="subunit">
    <text evidence="1">Homodimer. Heterotetramer of two MnmE and two MnmG subunits.</text>
</comment>
<comment type="subcellular location">
    <subcellularLocation>
        <location evidence="1">Cytoplasm</location>
    </subcellularLocation>
</comment>
<comment type="similarity">
    <text evidence="1">Belongs to the TRAFAC class TrmE-Era-EngA-EngB-Septin-like GTPase superfamily. TrmE GTPase family.</text>
</comment>
<gene>
    <name evidence="1" type="primary">mnmE</name>
    <name evidence="1" type="synonym">trmE</name>
    <name type="ordered locus">Bcenmc03_3179</name>
</gene>
<sequence length="464" mass="49447">MLATDSDPIVAIATAAGRGGIGVVRVSFGRGGEAAALPLIDALCGQKLAPRHASYVPFLDAHGAPLDRGIALYFPAPHSYTGEHVLELQGHGGPIVMQLLLQRCLDAGRGFGLRLAEPGEFTRRAFLNDKLDLAQAEAVADLIEASTEAAARSAGRSLDGAFSRQIHALVDDVITLRMLVEATLDFPEEEIDFLEAADARGKLAKIRAQLAHVLGDARQGALLREGLSVVLAGQPNVGKSSLLNALAGAELAIVTPIAGTTRDKVAQTIQVEGIPLHIIDTAGLRETEDEVERIGIARTWSEIERADVVLHLLDSRTGMTPDDETIAARFPAGVPVVRVLNKTDLTGVPACVEHPAAEGDLTEVHLSAKRGDGIDMLRAELLRIAGWQAGAEGVYLARERHLIALRAAQEHLAQAADHAEQRAQSLDLFAEELRLAQEQLNAITGEFTSDDLLGVIFSRFCIGK</sequence>